<accession>C5C0K2</accession>
<evidence type="ECO:0000255" key="1">
    <source>
        <dbReference type="HAMAP-Rule" id="MF_01322"/>
    </source>
</evidence>
<keyword id="KW-0240">DNA-directed RNA polymerase</keyword>
<keyword id="KW-0460">Magnesium</keyword>
<keyword id="KW-0479">Metal-binding</keyword>
<keyword id="KW-0548">Nucleotidyltransferase</keyword>
<keyword id="KW-1185">Reference proteome</keyword>
<keyword id="KW-0804">Transcription</keyword>
<keyword id="KW-0808">Transferase</keyword>
<keyword id="KW-0862">Zinc</keyword>
<feature type="chain" id="PRO_1000214491" description="DNA-directed RNA polymerase subunit beta'">
    <location>
        <begin position="1"/>
        <end position="1296"/>
    </location>
</feature>
<feature type="binding site" evidence="1">
    <location>
        <position position="60"/>
    </location>
    <ligand>
        <name>Zn(2+)</name>
        <dbReference type="ChEBI" id="CHEBI:29105"/>
        <label>1</label>
    </ligand>
</feature>
<feature type="binding site" evidence="1">
    <location>
        <position position="62"/>
    </location>
    <ligand>
        <name>Zn(2+)</name>
        <dbReference type="ChEBI" id="CHEBI:29105"/>
        <label>1</label>
    </ligand>
</feature>
<feature type="binding site" evidence="1">
    <location>
        <position position="75"/>
    </location>
    <ligand>
        <name>Zn(2+)</name>
        <dbReference type="ChEBI" id="CHEBI:29105"/>
        <label>1</label>
    </ligand>
</feature>
<feature type="binding site" evidence="1">
    <location>
        <position position="78"/>
    </location>
    <ligand>
        <name>Zn(2+)</name>
        <dbReference type="ChEBI" id="CHEBI:29105"/>
        <label>1</label>
    </ligand>
</feature>
<feature type="binding site" evidence="1">
    <location>
        <position position="535"/>
    </location>
    <ligand>
        <name>Mg(2+)</name>
        <dbReference type="ChEBI" id="CHEBI:18420"/>
    </ligand>
</feature>
<feature type="binding site" evidence="1">
    <location>
        <position position="537"/>
    </location>
    <ligand>
        <name>Mg(2+)</name>
        <dbReference type="ChEBI" id="CHEBI:18420"/>
    </ligand>
</feature>
<feature type="binding site" evidence="1">
    <location>
        <position position="539"/>
    </location>
    <ligand>
        <name>Mg(2+)</name>
        <dbReference type="ChEBI" id="CHEBI:18420"/>
    </ligand>
</feature>
<feature type="binding site" evidence="1">
    <location>
        <position position="877"/>
    </location>
    <ligand>
        <name>Zn(2+)</name>
        <dbReference type="ChEBI" id="CHEBI:29105"/>
        <label>2</label>
    </ligand>
</feature>
<feature type="binding site" evidence="1">
    <location>
        <position position="954"/>
    </location>
    <ligand>
        <name>Zn(2+)</name>
        <dbReference type="ChEBI" id="CHEBI:29105"/>
        <label>2</label>
    </ligand>
</feature>
<feature type="binding site" evidence="1">
    <location>
        <position position="961"/>
    </location>
    <ligand>
        <name>Zn(2+)</name>
        <dbReference type="ChEBI" id="CHEBI:29105"/>
        <label>2</label>
    </ligand>
</feature>
<feature type="binding site" evidence="1">
    <location>
        <position position="964"/>
    </location>
    <ligand>
        <name>Zn(2+)</name>
        <dbReference type="ChEBI" id="CHEBI:29105"/>
        <label>2</label>
    </ligand>
</feature>
<proteinExistence type="inferred from homology"/>
<reference key="1">
    <citation type="journal article" date="2009" name="Stand. Genomic Sci.">
        <title>Complete genome sequence of Beutenbergia cavernae type strain (HKI 0122).</title>
        <authorList>
            <person name="Land M."/>
            <person name="Pukall R."/>
            <person name="Abt B."/>
            <person name="Goker M."/>
            <person name="Rohde M."/>
            <person name="Glavina Del Rio T."/>
            <person name="Tice H."/>
            <person name="Copeland A."/>
            <person name="Cheng J.F."/>
            <person name="Lucas S."/>
            <person name="Chen F."/>
            <person name="Nolan M."/>
            <person name="Bruce D."/>
            <person name="Goodwin L."/>
            <person name="Pitluck S."/>
            <person name="Ivanova N."/>
            <person name="Mavromatis K."/>
            <person name="Ovchinnikova G."/>
            <person name="Pati A."/>
            <person name="Chen A."/>
            <person name="Palaniappan K."/>
            <person name="Hauser L."/>
            <person name="Chang Y.J."/>
            <person name="Jefferies C.C."/>
            <person name="Saunders E."/>
            <person name="Brettin T."/>
            <person name="Detter J.C."/>
            <person name="Han C."/>
            <person name="Chain P."/>
            <person name="Bristow J."/>
            <person name="Eisen J.A."/>
            <person name="Markowitz V."/>
            <person name="Hugenholtz P."/>
            <person name="Kyrpides N.C."/>
            <person name="Klenk H.P."/>
            <person name="Lapidus A."/>
        </authorList>
    </citation>
    <scope>NUCLEOTIDE SEQUENCE [LARGE SCALE GENOMIC DNA]</scope>
    <source>
        <strain>ATCC BAA-8 / DSM 12333 / CCUG 43141 / JCM 11478 / NBRC 16432 / NCIMB 13614 / HKI 0122</strain>
    </source>
</reference>
<name>RPOC_BEUC1</name>
<gene>
    <name evidence="1" type="primary">rpoC</name>
    <name type="ordered locus">Bcav_3154</name>
</gene>
<sequence>MLDVNVFDELRIGLATADDVRAWSHGEVKKPETINYRTLKPEKDGLFCEKIFGPTRDWECYCGKYKRVRFKGIICERCGVEVTRSKVRRERMGHIELAAPVTHIWYFKGVPSRLGYLLDLAPKDLEKVIYFAAYMITEVDDERRHTDLPSLQNEIDLERGEVAKRRDLDIEARAQRLEADLAELEAEGAKADARRKVRDSAEREMAQIRKRSDAELDRLERVWDRFKNLKVADLEGDELLYRELEQRYGSYFTGSMGAAAIQKRLETFDLDAEAEALRETIRSGKGQRKTRALKRLKVVNAFMTTTNSPLGMVLDCIPVIPPDLRPMVQLDGGRFATSDLNDLYRRVINRNNRLKRLLDLGAPEIIVNNEKRMLQEAVDALFDNGRRGRPVTGPGNRPLKSISDMLKGKQGRFRQNLLGKRVDYSGRSVIVVGPQLKLHQCGLPKQMALELFKPFVMKRLVDLNHAQNIKSAKRMVERARSVVWDVLEEVITEHPVLLNRAPTLHRLGIQAFEPQLVEGKAIHLHPLVCAAFNADFDGDQMAVHLPLSAEAQAEARILMLSSNNILKPSDGRPVTMPSQDMIIGLYHLTSDKDEALGAGRSFSSIAEAIMAFDAGGLDLNAVVKIRFTDLVPPTGFEAPEGWTEGESLLFETTLGRALFNEALPVDYPFVNGVVGKGELSVIVNDLAERYPKVEVAASLDALKEAGFSWATRSGVTIAISDVVTPSRKKEIVESYEKKAAKVQGQYEKGLITDEERRTELIDIWTQATNDVDAAMRENFPERNTVNRMVGSGARGNWMQVRQIAGMRGLVANPKGEIIPRPILSNYREGLSVVEYFIATHGARKGLADTALRTADSGYLTRRLVDVSQDVIIREEDCGTDRGLVTTIAEVGPDGVRRRSETVETGAYARTLATTVTSEDGTVLAEGGDDVGDVLISRLVEAGVDTIKVRSVLTCASRVGTCAKCYGRSLATGKLVDVGEAVGIIAAQSIGEPGTQLTMRTFHTGGVASADDITQGLPRVQELFEARTPKGEAPISEVAGRIAIDETDRTRRIVVTPDDGAEEIVYPITKRSRLLVNDGDHVAVGQQLIAGAVDPKKVLRILGPRAVQKHLVDEVQEVYRSQGVDIHDKHIEVIVRQMLRRVTVLDSGEANLLPGELAERGRFEDENRRVVSEGGTPASGRPELMGITKASLATDSWLSAASFQETTKVLTEAALSGRSDSLLGLKENVILGKLIPAGTGLPRYRNVRVEPTEEAKAELYPSFGYDEIDYLPLGTGSGEAIALEELDLGRGYEADYR</sequence>
<dbReference type="EC" id="2.7.7.6" evidence="1"/>
<dbReference type="EMBL" id="CP001618">
    <property type="protein sequence ID" value="ACQ81398.1"/>
    <property type="molecule type" value="Genomic_DNA"/>
</dbReference>
<dbReference type="RefSeq" id="WP_015883638.1">
    <property type="nucleotide sequence ID" value="NC_012669.1"/>
</dbReference>
<dbReference type="SMR" id="C5C0K2"/>
<dbReference type="STRING" id="471853.Bcav_3154"/>
<dbReference type="KEGG" id="bcv:Bcav_3154"/>
<dbReference type="eggNOG" id="COG0086">
    <property type="taxonomic scope" value="Bacteria"/>
</dbReference>
<dbReference type="HOGENOM" id="CLU_000524_3_1_11"/>
<dbReference type="OrthoDB" id="9815296at2"/>
<dbReference type="Proteomes" id="UP000007962">
    <property type="component" value="Chromosome"/>
</dbReference>
<dbReference type="GO" id="GO:0000428">
    <property type="term" value="C:DNA-directed RNA polymerase complex"/>
    <property type="evidence" value="ECO:0007669"/>
    <property type="project" value="UniProtKB-KW"/>
</dbReference>
<dbReference type="GO" id="GO:0003677">
    <property type="term" value="F:DNA binding"/>
    <property type="evidence" value="ECO:0007669"/>
    <property type="project" value="UniProtKB-UniRule"/>
</dbReference>
<dbReference type="GO" id="GO:0003899">
    <property type="term" value="F:DNA-directed RNA polymerase activity"/>
    <property type="evidence" value="ECO:0007669"/>
    <property type="project" value="UniProtKB-UniRule"/>
</dbReference>
<dbReference type="GO" id="GO:0000287">
    <property type="term" value="F:magnesium ion binding"/>
    <property type="evidence" value="ECO:0007669"/>
    <property type="project" value="UniProtKB-UniRule"/>
</dbReference>
<dbReference type="GO" id="GO:0008270">
    <property type="term" value="F:zinc ion binding"/>
    <property type="evidence" value="ECO:0007669"/>
    <property type="project" value="UniProtKB-UniRule"/>
</dbReference>
<dbReference type="GO" id="GO:0006351">
    <property type="term" value="P:DNA-templated transcription"/>
    <property type="evidence" value="ECO:0007669"/>
    <property type="project" value="UniProtKB-UniRule"/>
</dbReference>
<dbReference type="CDD" id="cd02655">
    <property type="entry name" value="RNAP_beta'_C"/>
    <property type="match status" value="1"/>
</dbReference>
<dbReference type="CDD" id="cd01609">
    <property type="entry name" value="RNAP_beta'_N"/>
    <property type="match status" value="1"/>
</dbReference>
<dbReference type="FunFam" id="1.10.150.390:FF:000002">
    <property type="entry name" value="DNA-directed RNA polymerase subunit beta"/>
    <property type="match status" value="1"/>
</dbReference>
<dbReference type="FunFam" id="1.10.40.90:FF:000001">
    <property type="entry name" value="DNA-directed RNA polymerase subunit beta"/>
    <property type="match status" value="1"/>
</dbReference>
<dbReference type="FunFam" id="4.10.860.120:FF:000001">
    <property type="entry name" value="DNA-directed RNA polymerase subunit beta"/>
    <property type="match status" value="1"/>
</dbReference>
<dbReference type="Gene3D" id="1.10.132.30">
    <property type="match status" value="1"/>
</dbReference>
<dbReference type="Gene3D" id="1.10.150.390">
    <property type="match status" value="1"/>
</dbReference>
<dbReference type="Gene3D" id="1.10.1790.20">
    <property type="match status" value="1"/>
</dbReference>
<dbReference type="Gene3D" id="1.10.40.90">
    <property type="match status" value="1"/>
</dbReference>
<dbReference type="Gene3D" id="2.40.40.20">
    <property type="match status" value="1"/>
</dbReference>
<dbReference type="Gene3D" id="2.40.50.100">
    <property type="match status" value="1"/>
</dbReference>
<dbReference type="Gene3D" id="4.10.860.120">
    <property type="entry name" value="RNA polymerase II, clamp domain"/>
    <property type="match status" value="1"/>
</dbReference>
<dbReference type="Gene3D" id="1.10.274.100">
    <property type="entry name" value="RNA polymerase Rpb1, domain 3"/>
    <property type="match status" value="1"/>
</dbReference>
<dbReference type="HAMAP" id="MF_01322">
    <property type="entry name" value="RNApol_bact_RpoC"/>
    <property type="match status" value="1"/>
</dbReference>
<dbReference type="InterPro" id="IPR045867">
    <property type="entry name" value="DNA-dir_RpoC_beta_prime"/>
</dbReference>
<dbReference type="InterPro" id="IPR012754">
    <property type="entry name" value="DNA-dir_RpoC_beta_prime_bact"/>
</dbReference>
<dbReference type="InterPro" id="IPR000722">
    <property type="entry name" value="RNA_pol_asu"/>
</dbReference>
<dbReference type="InterPro" id="IPR006592">
    <property type="entry name" value="RNA_pol_N"/>
</dbReference>
<dbReference type="InterPro" id="IPR007080">
    <property type="entry name" value="RNA_pol_Rpb1_1"/>
</dbReference>
<dbReference type="InterPro" id="IPR007066">
    <property type="entry name" value="RNA_pol_Rpb1_3"/>
</dbReference>
<dbReference type="InterPro" id="IPR042102">
    <property type="entry name" value="RNA_pol_Rpb1_3_sf"/>
</dbReference>
<dbReference type="InterPro" id="IPR007083">
    <property type="entry name" value="RNA_pol_Rpb1_4"/>
</dbReference>
<dbReference type="InterPro" id="IPR007081">
    <property type="entry name" value="RNA_pol_Rpb1_5"/>
</dbReference>
<dbReference type="InterPro" id="IPR044893">
    <property type="entry name" value="RNA_pol_Rpb1_clamp_domain"/>
</dbReference>
<dbReference type="InterPro" id="IPR038120">
    <property type="entry name" value="Rpb1_funnel_sf"/>
</dbReference>
<dbReference type="NCBIfam" id="NF011498">
    <property type="entry name" value="PRK14906.1"/>
    <property type="match status" value="1"/>
</dbReference>
<dbReference type="NCBIfam" id="TIGR02386">
    <property type="entry name" value="rpoC_TIGR"/>
    <property type="match status" value="1"/>
</dbReference>
<dbReference type="PANTHER" id="PTHR19376">
    <property type="entry name" value="DNA-DIRECTED RNA POLYMERASE"/>
    <property type="match status" value="1"/>
</dbReference>
<dbReference type="PANTHER" id="PTHR19376:SF54">
    <property type="entry name" value="DNA-DIRECTED RNA POLYMERASE SUBUNIT BETA"/>
    <property type="match status" value="1"/>
</dbReference>
<dbReference type="Pfam" id="PF04997">
    <property type="entry name" value="RNA_pol_Rpb1_1"/>
    <property type="match status" value="1"/>
</dbReference>
<dbReference type="Pfam" id="PF00623">
    <property type="entry name" value="RNA_pol_Rpb1_2"/>
    <property type="match status" value="2"/>
</dbReference>
<dbReference type="Pfam" id="PF04983">
    <property type="entry name" value="RNA_pol_Rpb1_3"/>
    <property type="match status" value="1"/>
</dbReference>
<dbReference type="Pfam" id="PF05000">
    <property type="entry name" value="RNA_pol_Rpb1_4"/>
    <property type="match status" value="1"/>
</dbReference>
<dbReference type="Pfam" id="PF04998">
    <property type="entry name" value="RNA_pol_Rpb1_5"/>
    <property type="match status" value="1"/>
</dbReference>
<dbReference type="SMART" id="SM00663">
    <property type="entry name" value="RPOLA_N"/>
    <property type="match status" value="1"/>
</dbReference>
<dbReference type="SUPFAM" id="SSF64484">
    <property type="entry name" value="beta and beta-prime subunits of DNA dependent RNA-polymerase"/>
    <property type="match status" value="1"/>
</dbReference>
<organism>
    <name type="scientific">Beutenbergia cavernae (strain ATCC BAA-8 / DSM 12333 / CCUG 43141 / JCM 11478 / NBRC 16432 / NCIMB 13614 / HKI 0122)</name>
    <dbReference type="NCBI Taxonomy" id="471853"/>
    <lineage>
        <taxon>Bacteria</taxon>
        <taxon>Bacillati</taxon>
        <taxon>Actinomycetota</taxon>
        <taxon>Actinomycetes</taxon>
        <taxon>Micrococcales</taxon>
        <taxon>Beutenbergiaceae</taxon>
        <taxon>Beutenbergia</taxon>
    </lineage>
</organism>
<comment type="function">
    <text evidence="1">DNA-dependent RNA polymerase catalyzes the transcription of DNA into RNA using the four ribonucleoside triphosphates as substrates.</text>
</comment>
<comment type="catalytic activity">
    <reaction evidence="1">
        <text>RNA(n) + a ribonucleoside 5'-triphosphate = RNA(n+1) + diphosphate</text>
        <dbReference type="Rhea" id="RHEA:21248"/>
        <dbReference type="Rhea" id="RHEA-COMP:14527"/>
        <dbReference type="Rhea" id="RHEA-COMP:17342"/>
        <dbReference type="ChEBI" id="CHEBI:33019"/>
        <dbReference type="ChEBI" id="CHEBI:61557"/>
        <dbReference type="ChEBI" id="CHEBI:140395"/>
        <dbReference type="EC" id="2.7.7.6"/>
    </reaction>
</comment>
<comment type="cofactor">
    <cofactor evidence="1">
        <name>Mg(2+)</name>
        <dbReference type="ChEBI" id="CHEBI:18420"/>
    </cofactor>
    <text evidence="1">Binds 1 Mg(2+) ion per subunit.</text>
</comment>
<comment type="cofactor">
    <cofactor evidence="1">
        <name>Zn(2+)</name>
        <dbReference type="ChEBI" id="CHEBI:29105"/>
    </cofactor>
    <text evidence="1">Binds 2 Zn(2+) ions per subunit.</text>
</comment>
<comment type="subunit">
    <text evidence="1">The RNAP catalytic core consists of 2 alpha, 1 beta, 1 beta' and 1 omega subunit. When a sigma factor is associated with the core the holoenzyme is formed, which can initiate transcription.</text>
</comment>
<comment type="similarity">
    <text evidence="1">Belongs to the RNA polymerase beta' chain family.</text>
</comment>
<protein>
    <recommendedName>
        <fullName evidence="1">DNA-directed RNA polymerase subunit beta'</fullName>
        <shortName evidence="1">RNAP subunit beta'</shortName>
        <ecNumber evidence="1">2.7.7.6</ecNumber>
    </recommendedName>
    <alternativeName>
        <fullName evidence="1">RNA polymerase subunit beta'</fullName>
    </alternativeName>
    <alternativeName>
        <fullName evidence="1">Transcriptase subunit beta'</fullName>
    </alternativeName>
</protein>